<dbReference type="EMBL" id="CP000117">
    <property type="protein sequence ID" value="ABA22359.1"/>
    <property type="molecule type" value="Genomic_DNA"/>
</dbReference>
<dbReference type="SMR" id="Q3M9H7"/>
<dbReference type="STRING" id="240292.Ava_2746"/>
<dbReference type="KEGG" id="ava:Ava_2746"/>
<dbReference type="eggNOG" id="COG2010">
    <property type="taxonomic scope" value="Bacteria"/>
</dbReference>
<dbReference type="HOGENOM" id="CLU_104149_1_0_3"/>
<dbReference type="Proteomes" id="UP000002533">
    <property type="component" value="Chromosome"/>
</dbReference>
<dbReference type="GO" id="GO:0009523">
    <property type="term" value="C:photosystem II"/>
    <property type="evidence" value="ECO:0007669"/>
    <property type="project" value="UniProtKB-KW"/>
</dbReference>
<dbReference type="GO" id="GO:0031676">
    <property type="term" value="C:plasma membrane-derived thylakoid membrane"/>
    <property type="evidence" value="ECO:0007669"/>
    <property type="project" value="UniProtKB-SubCell"/>
</dbReference>
<dbReference type="GO" id="GO:0009055">
    <property type="term" value="F:electron transfer activity"/>
    <property type="evidence" value="ECO:0007669"/>
    <property type="project" value="InterPro"/>
</dbReference>
<dbReference type="GO" id="GO:0020037">
    <property type="term" value="F:heme binding"/>
    <property type="evidence" value="ECO:0007669"/>
    <property type="project" value="InterPro"/>
</dbReference>
<dbReference type="GO" id="GO:0005506">
    <property type="term" value="F:iron ion binding"/>
    <property type="evidence" value="ECO:0007669"/>
    <property type="project" value="InterPro"/>
</dbReference>
<dbReference type="GO" id="GO:0019684">
    <property type="term" value="P:photosynthesis, light reaction"/>
    <property type="evidence" value="ECO:0007669"/>
    <property type="project" value="UniProtKB-UniRule"/>
</dbReference>
<dbReference type="GO" id="GO:0022904">
    <property type="term" value="P:respiratory electron transport chain"/>
    <property type="evidence" value="ECO:0007669"/>
    <property type="project" value="InterPro"/>
</dbReference>
<dbReference type="Gene3D" id="1.10.760.10">
    <property type="entry name" value="Cytochrome c-like domain"/>
    <property type="match status" value="1"/>
</dbReference>
<dbReference type="HAMAP" id="MF_01378">
    <property type="entry name" value="PSII_Cyt550"/>
    <property type="match status" value="1"/>
</dbReference>
<dbReference type="InterPro" id="IPR009056">
    <property type="entry name" value="Cyt_c-like_dom"/>
</dbReference>
<dbReference type="InterPro" id="IPR036909">
    <property type="entry name" value="Cyt_c-like_dom_sf"/>
</dbReference>
<dbReference type="InterPro" id="IPR029490">
    <property type="entry name" value="Cytochrom_C550"/>
</dbReference>
<dbReference type="InterPro" id="IPR017851">
    <property type="entry name" value="PsbV_cyt_c550"/>
</dbReference>
<dbReference type="InterPro" id="IPR016003">
    <property type="entry name" value="PsbV_cyt_c550-like"/>
</dbReference>
<dbReference type="NCBIfam" id="TIGR03045">
    <property type="entry name" value="PS_II_C550"/>
    <property type="match status" value="1"/>
</dbReference>
<dbReference type="Pfam" id="PF14495">
    <property type="entry name" value="Cytochrom_C550"/>
    <property type="match status" value="1"/>
</dbReference>
<dbReference type="PIRSF" id="PIRSF005890">
    <property type="entry name" value="Phot_II_cyt_c550"/>
    <property type="match status" value="1"/>
</dbReference>
<dbReference type="SUPFAM" id="SSF46626">
    <property type="entry name" value="Cytochrome c"/>
    <property type="match status" value="1"/>
</dbReference>
<dbReference type="PROSITE" id="PS51007">
    <property type="entry name" value="CYTC"/>
    <property type="match status" value="1"/>
</dbReference>
<comment type="function">
    <text evidence="1">One of the extrinsic, lumenal subunits of photosystem II (PSII). PSII is a light-driven water plastoquinone oxidoreductase, using light energy to abstract electrons from H(2)O, generating a proton gradient subsequently used for ATP formation. The extrinsic proteins stabilize the structure of photosystem II oxygen-evolving complex (OEC), the ion environment of oxygen evolution and protect the OEC against heat-induced inactivation. Low-potential cytochrome c that plays a role in the OEC of PSII.</text>
</comment>
<comment type="cofactor">
    <cofactor evidence="1">
        <name>heme c</name>
        <dbReference type="ChEBI" id="CHEBI:61717"/>
    </cofactor>
    <text evidence="1">Binds 1 heme c group covalently per subunit.</text>
</comment>
<comment type="subunit">
    <text evidence="1">PSII is composed of 1 copy each of membrane proteins PsbA, PsbB, PsbC, PsbD, PsbE, PsbF, PsbH, PsbI, PsbJ, PsbK, PsbL, PsbM, PsbT, PsbX, PsbY, PsbZ, Psb30/Ycf12, peripheral proteins PsbO, CyanoQ (PsbQ), PsbU, PsbV and a large number of cofactors. It forms dimeric complexes.</text>
</comment>
<comment type="subcellular location">
    <subcellularLocation>
        <location evidence="1">Cellular thylakoid membrane</location>
        <topology evidence="1">Peripheral membrane protein</topology>
        <orientation evidence="1">Lumenal side</orientation>
    </subcellularLocation>
    <text evidence="1">Associated with photosystem II at the lumenal side of the thylakoid membrane.</text>
</comment>
<comment type="similarity">
    <text evidence="1">Belongs to the cytochrome c family. PsbV subfamily.</text>
</comment>
<evidence type="ECO:0000255" key="1">
    <source>
        <dbReference type="HAMAP-Rule" id="MF_01378"/>
    </source>
</evidence>
<feature type="signal peptide" evidence="1">
    <location>
        <begin position="1"/>
        <end position="26"/>
    </location>
</feature>
<feature type="chain" id="PRO_5000104120" description="Photosystem II extrinsic protein V">
    <location>
        <begin position="27"/>
        <end position="163"/>
    </location>
</feature>
<feature type="binding site" description="covalent" evidence="1">
    <location>
        <position position="63"/>
    </location>
    <ligand>
        <name>heme c</name>
        <dbReference type="ChEBI" id="CHEBI:61717"/>
    </ligand>
</feature>
<feature type="binding site" description="covalent" evidence="1">
    <location>
        <position position="66"/>
    </location>
    <ligand>
        <name>heme c</name>
        <dbReference type="ChEBI" id="CHEBI:61717"/>
    </ligand>
</feature>
<feature type="binding site" description="axial binding residue" evidence="1">
    <location>
        <position position="67"/>
    </location>
    <ligand>
        <name>heme c</name>
        <dbReference type="ChEBI" id="CHEBI:61717"/>
    </ligand>
    <ligandPart>
        <name>Fe</name>
        <dbReference type="ChEBI" id="CHEBI:18248"/>
    </ligandPart>
</feature>
<feature type="binding site" description="axial binding residue" evidence="1">
    <location>
        <position position="118"/>
    </location>
    <ligand>
        <name>heme c</name>
        <dbReference type="ChEBI" id="CHEBI:61717"/>
    </ligand>
    <ligandPart>
        <name>Fe</name>
        <dbReference type="ChEBI" id="CHEBI:18248"/>
    </ligandPart>
</feature>
<gene>
    <name evidence="1" type="primary">psbV</name>
    <name type="ordered locus">Ava_2746</name>
</gene>
<organism>
    <name type="scientific">Trichormus variabilis (strain ATCC 29413 / PCC 7937)</name>
    <name type="common">Anabaena variabilis</name>
    <dbReference type="NCBI Taxonomy" id="240292"/>
    <lineage>
        <taxon>Bacteria</taxon>
        <taxon>Bacillati</taxon>
        <taxon>Cyanobacteriota</taxon>
        <taxon>Cyanophyceae</taxon>
        <taxon>Nostocales</taxon>
        <taxon>Nostocaceae</taxon>
        <taxon>Trichormus</taxon>
    </lineage>
</organism>
<keyword id="KW-0249">Electron transport</keyword>
<keyword id="KW-0349">Heme</keyword>
<keyword id="KW-0408">Iron</keyword>
<keyword id="KW-0472">Membrane</keyword>
<keyword id="KW-0479">Metal-binding</keyword>
<keyword id="KW-0602">Photosynthesis</keyword>
<keyword id="KW-0604">Photosystem II</keyword>
<keyword id="KW-0732">Signal</keyword>
<keyword id="KW-0793">Thylakoid</keyword>
<keyword id="KW-0813">Transport</keyword>
<accession>Q3M9H7</accession>
<name>CY550_TRIV2</name>
<proteinExistence type="inferred from homology"/>
<reference key="1">
    <citation type="journal article" date="2014" name="Stand. Genomic Sci.">
        <title>Complete genome sequence of Anabaena variabilis ATCC 29413.</title>
        <authorList>
            <person name="Thiel T."/>
            <person name="Pratte B.S."/>
            <person name="Zhong J."/>
            <person name="Goodwin L."/>
            <person name="Copeland A."/>
            <person name="Lucas S."/>
            <person name="Han C."/>
            <person name="Pitluck S."/>
            <person name="Land M.L."/>
            <person name="Kyrpides N.C."/>
            <person name="Woyke T."/>
        </authorList>
    </citation>
    <scope>NUCLEOTIDE SEQUENCE [LARGE SCALE GENOMIC DNA]</scope>
    <source>
        <strain>ATCC 29413 / PCC 7937</strain>
    </source>
</reference>
<sequence>MFRRLIGVVVATVLLTFQLIVGSATALELDEATRTVPLNAQGDTVTLSLKQVKEGKRLFQYACAQCHVGGVTKTNQNVGLEPEALALATPNRNNIEGLVDYMKNPTTYDGVEEISEIHPSIKSADIFTAMRNLTDKDLESIAGHILLQPKILGDKWGGGKIYY</sequence>
<protein>
    <recommendedName>
        <fullName evidence="1">Photosystem II extrinsic protein V</fullName>
        <shortName evidence="1">PsbV</shortName>
    </recommendedName>
    <alternativeName>
        <fullName evidence="1">Cytochrome c-550</fullName>
    </alternativeName>
    <alternativeName>
        <fullName evidence="1">Cytochrome c550</fullName>
    </alternativeName>
    <alternativeName>
        <fullName evidence="1">Low-potential cytochrome c</fullName>
    </alternativeName>
</protein>